<gene>
    <name evidence="1" type="primary">RpS3A</name>
    <name type="ORF">GG16465</name>
</gene>
<evidence type="ECO:0000255" key="1">
    <source>
        <dbReference type="HAMAP-Rule" id="MF_03122"/>
    </source>
</evidence>
<evidence type="ECO:0000256" key="2">
    <source>
        <dbReference type="SAM" id="MobiDB-lite"/>
    </source>
</evidence>
<evidence type="ECO:0000305" key="3"/>
<feature type="initiator methionine" description="Removed" evidence="1">
    <location>
        <position position="1"/>
    </location>
</feature>
<feature type="chain" id="PRO_0000389307" description="Small ribosomal subunit protein eS1">
    <location>
        <begin position="2"/>
        <end position="268"/>
    </location>
</feature>
<feature type="region of interest" description="Disordered" evidence="2">
    <location>
        <begin position="1"/>
        <end position="21"/>
    </location>
</feature>
<comment type="function">
    <text evidence="1">Essential for oogenesis; required for late follicle cell development.</text>
</comment>
<comment type="subunit">
    <text evidence="1">Component of the small ribosomal subunit. Mature ribosomes consist of a small (40S) and a large (60S) subunit. The 40S subunit contains about 33 different proteins and 1 molecule of RNA (18S). The 60S subunit contains about 49 different proteins and 3 molecules of RNA (28S, 5.8S and 5S).</text>
</comment>
<comment type="subcellular location">
    <subcellularLocation>
        <location evidence="1">Cytoplasm</location>
    </subcellularLocation>
</comment>
<comment type="similarity">
    <text evidence="1">Belongs to the eukaryotic ribosomal protein eS1 family.</text>
</comment>
<sequence length="268" mass="30340">MAVGKNKGLSKGGKKGGKKKVVDPFSRKDWYDVKAPNMFQTRQIGKTLVNRTQGQRIASDYLKGRVFEVSLADLQKDIDPERSFRKFRLIAEDVQDRNVLCNFHGMDLTTDKYRSMVKKWQTLIEAIVEAKTVDGYLLRVFCIGFTAKDQQSQRKTCYAQQSQVRKIRARMTDIITNEVSGADLKQLVNKLALDSIAKDIEKSCQRIYPLHDVYIRKVKVLKKPRFDVSKLLELHGDGGGKSVEAVVSSEGAVIDRPEGYEPPVQEAV</sequence>
<reference key="1">
    <citation type="journal article" date="2007" name="Nature">
        <title>Evolution of genes and genomes on the Drosophila phylogeny.</title>
        <authorList>
            <consortium name="Drosophila 12 genomes consortium"/>
        </authorList>
    </citation>
    <scope>NUCLEOTIDE SEQUENCE [LARGE SCALE GENOMIC DNA]</scope>
    <source>
        <strain>Tucson 14021-0224.01</strain>
    </source>
</reference>
<keyword id="KW-0963">Cytoplasm</keyword>
<keyword id="KW-0217">Developmental protein</keyword>
<keyword id="KW-0221">Differentiation</keyword>
<keyword id="KW-0896">Oogenesis</keyword>
<keyword id="KW-0687">Ribonucleoprotein</keyword>
<keyword id="KW-0689">Ribosomal protein</keyword>
<proteinExistence type="inferred from homology"/>
<name>RS3A_DROER</name>
<organism>
    <name type="scientific">Drosophila erecta</name>
    <name type="common">Fruit fly</name>
    <dbReference type="NCBI Taxonomy" id="7220"/>
    <lineage>
        <taxon>Eukaryota</taxon>
        <taxon>Metazoa</taxon>
        <taxon>Ecdysozoa</taxon>
        <taxon>Arthropoda</taxon>
        <taxon>Hexapoda</taxon>
        <taxon>Insecta</taxon>
        <taxon>Pterygota</taxon>
        <taxon>Neoptera</taxon>
        <taxon>Endopterygota</taxon>
        <taxon>Diptera</taxon>
        <taxon>Brachycera</taxon>
        <taxon>Muscomorpha</taxon>
        <taxon>Ephydroidea</taxon>
        <taxon>Drosophilidae</taxon>
        <taxon>Drosophila</taxon>
        <taxon>Sophophora</taxon>
    </lineage>
</organism>
<protein>
    <recommendedName>
        <fullName evidence="1">Small ribosomal subunit protein eS1</fullName>
    </recommendedName>
    <alternativeName>
        <fullName evidence="3">40S ribosomal protein S3a</fullName>
    </alternativeName>
</protein>
<accession>B3P9W1</accession>
<dbReference type="EMBL" id="CH954184">
    <property type="protein sequence ID" value="EDV45274.1"/>
    <property type="molecule type" value="Genomic_DNA"/>
</dbReference>
<dbReference type="SMR" id="B3P9W1"/>
<dbReference type="EnsemblMetazoa" id="FBtr0136519">
    <property type="protein sequence ID" value="FBpp0135011"/>
    <property type="gene ID" value="FBgn0108696"/>
</dbReference>
<dbReference type="EnsemblMetazoa" id="XM_001982719.3">
    <property type="protein sequence ID" value="XP_001982755.1"/>
    <property type="gene ID" value="LOC6555878"/>
</dbReference>
<dbReference type="GeneID" id="6555878"/>
<dbReference type="KEGG" id="der:6555878"/>
<dbReference type="CTD" id="6189"/>
<dbReference type="eggNOG" id="KOG1628">
    <property type="taxonomic scope" value="Eukaryota"/>
</dbReference>
<dbReference type="HOGENOM" id="CLU_062507_0_1_1"/>
<dbReference type="OMA" id="TRFKGHE"/>
<dbReference type="OrthoDB" id="9834376at2759"/>
<dbReference type="PhylomeDB" id="B3P9W1"/>
<dbReference type="ChiTaRS" id="RpS3A">
    <property type="organism name" value="fly"/>
</dbReference>
<dbReference type="Proteomes" id="UP000008711">
    <property type="component" value="Unassembled WGS sequence"/>
</dbReference>
<dbReference type="GO" id="GO:0022627">
    <property type="term" value="C:cytosolic small ribosomal subunit"/>
    <property type="evidence" value="ECO:0007669"/>
    <property type="project" value="UniProtKB-UniRule"/>
</dbReference>
<dbReference type="GO" id="GO:0003735">
    <property type="term" value="F:structural constituent of ribosome"/>
    <property type="evidence" value="ECO:0007669"/>
    <property type="project" value="UniProtKB-UniRule"/>
</dbReference>
<dbReference type="GO" id="GO:0048477">
    <property type="term" value="P:oogenesis"/>
    <property type="evidence" value="ECO:0007669"/>
    <property type="project" value="UniProtKB-KW"/>
</dbReference>
<dbReference type="GO" id="GO:0006412">
    <property type="term" value="P:translation"/>
    <property type="evidence" value="ECO:0007669"/>
    <property type="project" value="UniProtKB-UniRule"/>
</dbReference>
<dbReference type="HAMAP" id="MF_03122">
    <property type="entry name" value="Ribosomal_eS1_euk"/>
    <property type="match status" value="1"/>
</dbReference>
<dbReference type="InterPro" id="IPR001593">
    <property type="entry name" value="Ribosomal_eS1"/>
</dbReference>
<dbReference type="InterPro" id="IPR018281">
    <property type="entry name" value="Ribosomal_eS1_CS"/>
</dbReference>
<dbReference type="InterPro" id="IPR027500">
    <property type="entry name" value="Ribosomal_eS1_euk"/>
</dbReference>
<dbReference type="PANTHER" id="PTHR11830">
    <property type="entry name" value="40S RIBOSOMAL PROTEIN S3A"/>
    <property type="match status" value="1"/>
</dbReference>
<dbReference type="Pfam" id="PF01015">
    <property type="entry name" value="Ribosomal_S3Ae"/>
    <property type="match status" value="1"/>
</dbReference>
<dbReference type="SMART" id="SM01397">
    <property type="entry name" value="Ribosomal_S3Ae"/>
    <property type="match status" value="1"/>
</dbReference>
<dbReference type="PROSITE" id="PS01191">
    <property type="entry name" value="RIBOSOMAL_S3AE"/>
    <property type="match status" value="1"/>
</dbReference>